<gene>
    <name evidence="1" type="primary">tatE</name>
    <name type="ordered locus">ROD_06411</name>
</gene>
<keyword id="KW-0997">Cell inner membrane</keyword>
<keyword id="KW-1003">Cell membrane</keyword>
<keyword id="KW-0472">Membrane</keyword>
<keyword id="KW-0653">Protein transport</keyword>
<keyword id="KW-1185">Reference proteome</keyword>
<keyword id="KW-0811">Translocation</keyword>
<keyword id="KW-0812">Transmembrane</keyword>
<keyword id="KW-1133">Transmembrane helix</keyword>
<keyword id="KW-0813">Transport</keyword>
<reference key="1">
    <citation type="journal article" date="2010" name="J. Bacteriol.">
        <title>The Citrobacter rodentium genome sequence reveals convergent evolution with human pathogenic Escherichia coli.</title>
        <authorList>
            <person name="Petty N.K."/>
            <person name="Bulgin R."/>
            <person name="Crepin V.F."/>
            <person name="Cerdeno-Tarraga A.M."/>
            <person name="Schroeder G.N."/>
            <person name="Quail M.A."/>
            <person name="Lennard N."/>
            <person name="Corton C."/>
            <person name="Barron A."/>
            <person name="Clark L."/>
            <person name="Toribio A.L."/>
            <person name="Parkhill J."/>
            <person name="Dougan G."/>
            <person name="Frankel G."/>
            <person name="Thomson N.R."/>
        </authorList>
    </citation>
    <scope>NUCLEOTIDE SEQUENCE [LARGE SCALE GENOMIC DNA]</scope>
    <source>
        <strain>ICC168</strain>
    </source>
</reference>
<protein>
    <recommendedName>
        <fullName evidence="1">Probable Sec-independent protein translocase protein TatE</fullName>
    </recommendedName>
</protein>
<evidence type="ECO:0000255" key="1">
    <source>
        <dbReference type="HAMAP-Rule" id="MF_00903"/>
    </source>
</evidence>
<feature type="chain" id="PRO_0000412959" description="Probable Sec-independent protein translocase protein TatE">
    <location>
        <begin position="1"/>
        <end position="67"/>
    </location>
</feature>
<feature type="transmembrane region" description="Helical" evidence="1">
    <location>
        <begin position="4"/>
        <end position="21"/>
    </location>
</feature>
<sequence>MGEISITKLLVIAALVVLLFGTKKLRTLGGDLGTAIKGFKKAMNDDDATAKRDADSGIQAEKLSHKE</sequence>
<name>TATE_CITRI</name>
<organism>
    <name type="scientific">Citrobacter rodentium (strain ICC168)</name>
    <name type="common">Citrobacter freundii biotype 4280</name>
    <dbReference type="NCBI Taxonomy" id="637910"/>
    <lineage>
        <taxon>Bacteria</taxon>
        <taxon>Pseudomonadati</taxon>
        <taxon>Pseudomonadota</taxon>
        <taxon>Gammaproteobacteria</taxon>
        <taxon>Enterobacterales</taxon>
        <taxon>Enterobacteriaceae</taxon>
        <taxon>Citrobacter</taxon>
    </lineage>
</organism>
<dbReference type="EMBL" id="FN543502">
    <property type="protein sequence ID" value="CBG87416.1"/>
    <property type="molecule type" value="Genomic_DNA"/>
</dbReference>
<dbReference type="RefSeq" id="WP_012904979.1">
    <property type="nucleotide sequence ID" value="NC_013716.1"/>
</dbReference>
<dbReference type="SMR" id="D2TMS1"/>
<dbReference type="STRING" id="637910.ROD_06411"/>
<dbReference type="KEGG" id="cro:ROD_06411"/>
<dbReference type="eggNOG" id="COG1826">
    <property type="taxonomic scope" value="Bacteria"/>
</dbReference>
<dbReference type="HOGENOM" id="CLU_086034_5_3_6"/>
<dbReference type="OrthoDB" id="7066617at2"/>
<dbReference type="Proteomes" id="UP000001889">
    <property type="component" value="Chromosome"/>
</dbReference>
<dbReference type="GO" id="GO:0033281">
    <property type="term" value="C:TAT protein transport complex"/>
    <property type="evidence" value="ECO:0007669"/>
    <property type="project" value="UniProtKB-UniRule"/>
</dbReference>
<dbReference type="GO" id="GO:0008320">
    <property type="term" value="F:protein transmembrane transporter activity"/>
    <property type="evidence" value="ECO:0007669"/>
    <property type="project" value="UniProtKB-UniRule"/>
</dbReference>
<dbReference type="GO" id="GO:0043953">
    <property type="term" value="P:protein transport by the Tat complex"/>
    <property type="evidence" value="ECO:0007669"/>
    <property type="project" value="UniProtKB-UniRule"/>
</dbReference>
<dbReference type="FunFam" id="1.20.5.3310:FF:000001">
    <property type="entry name" value="Probable Sec-independent protein translocase protein TatE"/>
    <property type="match status" value="1"/>
</dbReference>
<dbReference type="Gene3D" id="1.20.5.3310">
    <property type="match status" value="1"/>
</dbReference>
<dbReference type="HAMAP" id="MF_00236">
    <property type="entry name" value="TatA_E"/>
    <property type="match status" value="1"/>
</dbReference>
<dbReference type="HAMAP" id="MF_00903">
    <property type="entry name" value="TatE"/>
    <property type="match status" value="1"/>
</dbReference>
<dbReference type="InterPro" id="IPR003369">
    <property type="entry name" value="TatA/B/E"/>
</dbReference>
<dbReference type="InterPro" id="IPR006312">
    <property type="entry name" value="TatA/E"/>
</dbReference>
<dbReference type="InterPro" id="IPR024905">
    <property type="entry name" value="TatE"/>
</dbReference>
<dbReference type="NCBIfam" id="NF002448">
    <property type="entry name" value="PRK01614.1"/>
    <property type="match status" value="1"/>
</dbReference>
<dbReference type="NCBIfam" id="NF002960">
    <property type="entry name" value="PRK03625.1"/>
    <property type="match status" value="1"/>
</dbReference>
<dbReference type="NCBIfam" id="TIGR01411">
    <property type="entry name" value="tatAE"/>
    <property type="match status" value="1"/>
</dbReference>
<dbReference type="PANTHER" id="PTHR42982">
    <property type="entry name" value="SEC-INDEPENDENT PROTEIN TRANSLOCASE PROTEIN TATA"/>
    <property type="match status" value="1"/>
</dbReference>
<dbReference type="PANTHER" id="PTHR42982:SF5">
    <property type="entry name" value="SEC-INDEPENDENT PROTEIN TRANSLOCASE PROTEIN TATE"/>
    <property type="match status" value="1"/>
</dbReference>
<dbReference type="Pfam" id="PF02416">
    <property type="entry name" value="TatA_B_E"/>
    <property type="match status" value="1"/>
</dbReference>
<accession>D2TMS1</accession>
<proteinExistence type="inferred from homology"/>
<comment type="function">
    <text evidence="1">Part of the twin-arginine translocation (Tat) system that transports large folded proteins containing a characteristic twin-arginine motif in their signal peptide across membranes. TatE shares overlapping functions with TatA.</text>
</comment>
<comment type="subcellular location">
    <subcellularLocation>
        <location evidence="1">Cell inner membrane</location>
        <topology evidence="1">Single-pass membrane protein</topology>
    </subcellularLocation>
</comment>
<comment type="similarity">
    <text evidence="1">Belongs to the TatA/E family. TatE subfamily.</text>
</comment>